<protein>
    <recommendedName>
        <fullName evidence="1">Mannitol-1-phosphate 5-dehydrogenase</fullName>
        <ecNumber evidence="1">1.1.1.17</ecNumber>
    </recommendedName>
</protein>
<organism>
    <name type="scientific">Tolumonas auensis (strain DSM 9187 / NBRC 110442 / TA 4)</name>
    <dbReference type="NCBI Taxonomy" id="595494"/>
    <lineage>
        <taxon>Bacteria</taxon>
        <taxon>Pseudomonadati</taxon>
        <taxon>Pseudomonadota</taxon>
        <taxon>Gammaproteobacteria</taxon>
        <taxon>Aeromonadales</taxon>
        <taxon>Aeromonadaceae</taxon>
        <taxon>Tolumonas</taxon>
    </lineage>
</organism>
<comment type="catalytic activity">
    <reaction evidence="1">
        <text>D-mannitol 1-phosphate + NAD(+) = beta-D-fructose 6-phosphate + NADH + H(+)</text>
        <dbReference type="Rhea" id="RHEA:19661"/>
        <dbReference type="ChEBI" id="CHEBI:15378"/>
        <dbReference type="ChEBI" id="CHEBI:57540"/>
        <dbReference type="ChEBI" id="CHEBI:57634"/>
        <dbReference type="ChEBI" id="CHEBI:57945"/>
        <dbReference type="ChEBI" id="CHEBI:61381"/>
        <dbReference type="EC" id="1.1.1.17"/>
    </reaction>
</comment>
<comment type="similarity">
    <text evidence="1">Belongs to the mannitol dehydrogenase family.</text>
</comment>
<sequence>MKALHFGAGNIGRGFIGKLLAESDAEVTFADANTQLVDQLNHSQEYHVRVVGDNQHTDVIRHIAAVQANSDDVINQIIKADIITTAVGPQVLAKIAATIARGLQLRFEQGNYAPVNIIACENMVRGTSQLKQAVLAELPAQYHAQLEEYVGFVDSAVDRIVPPAAANDEDPLAVTVESFSEWIVDKNQFRGDIPPVQGMELTDNLIAYVERKLFTLNTGHIVTAYLGKLAGYKTIREAIADEEIQQAVRQAMQQSGEVLVKRYGFDRQLHHAYIEKILTRFANPYLVDEIDRVGRQPLRKLGAEDRLTKPLLGTLEYGLPNDALLKGIAAALHYRNADDPQAVELQGWIEQDGVEAALLRATGLKADEPCVATIVAEYQRMA</sequence>
<accession>C4L8P4</accession>
<evidence type="ECO:0000255" key="1">
    <source>
        <dbReference type="HAMAP-Rule" id="MF_00196"/>
    </source>
</evidence>
<proteinExistence type="inferred from homology"/>
<reference key="1">
    <citation type="submission" date="2009-05" db="EMBL/GenBank/DDBJ databases">
        <title>Complete sequence of Tolumonas auensis DSM 9187.</title>
        <authorList>
            <consortium name="US DOE Joint Genome Institute"/>
            <person name="Lucas S."/>
            <person name="Copeland A."/>
            <person name="Lapidus A."/>
            <person name="Glavina del Rio T."/>
            <person name="Tice H."/>
            <person name="Bruce D."/>
            <person name="Goodwin L."/>
            <person name="Pitluck S."/>
            <person name="Chertkov O."/>
            <person name="Brettin T."/>
            <person name="Detter J.C."/>
            <person name="Han C."/>
            <person name="Larimer F."/>
            <person name="Land M."/>
            <person name="Hauser L."/>
            <person name="Kyrpides N."/>
            <person name="Mikhailova N."/>
            <person name="Spring S."/>
            <person name="Beller H."/>
        </authorList>
    </citation>
    <scope>NUCLEOTIDE SEQUENCE [LARGE SCALE GENOMIC DNA]</scope>
    <source>
        <strain>DSM 9187 / NBRC 110442 / TA 4</strain>
    </source>
</reference>
<name>MTLD_TOLAT</name>
<dbReference type="EC" id="1.1.1.17" evidence="1"/>
<dbReference type="EMBL" id="CP001616">
    <property type="protein sequence ID" value="ACQ91914.1"/>
    <property type="molecule type" value="Genomic_DNA"/>
</dbReference>
<dbReference type="RefSeq" id="WP_012728513.1">
    <property type="nucleotide sequence ID" value="NC_012691.1"/>
</dbReference>
<dbReference type="SMR" id="C4L8P4"/>
<dbReference type="STRING" id="595494.Tola_0284"/>
<dbReference type="KEGG" id="tau:Tola_0284"/>
<dbReference type="eggNOG" id="COG0246">
    <property type="taxonomic scope" value="Bacteria"/>
</dbReference>
<dbReference type="HOGENOM" id="CLU_036089_2_0_6"/>
<dbReference type="OrthoDB" id="271711at2"/>
<dbReference type="Proteomes" id="UP000009073">
    <property type="component" value="Chromosome"/>
</dbReference>
<dbReference type="GO" id="GO:0005829">
    <property type="term" value="C:cytosol"/>
    <property type="evidence" value="ECO:0007669"/>
    <property type="project" value="TreeGrafter"/>
</dbReference>
<dbReference type="GO" id="GO:0008926">
    <property type="term" value="F:mannitol-1-phosphate 5-dehydrogenase activity"/>
    <property type="evidence" value="ECO:0007669"/>
    <property type="project" value="UniProtKB-UniRule"/>
</dbReference>
<dbReference type="GO" id="GO:0019592">
    <property type="term" value="P:mannitol catabolic process"/>
    <property type="evidence" value="ECO:0007669"/>
    <property type="project" value="TreeGrafter"/>
</dbReference>
<dbReference type="FunFam" id="1.10.1040.10:FF:000009">
    <property type="entry name" value="Mannitol-1-phosphate 5-dehydrogenase"/>
    <property type="match status" value="1"/>
</dbReference>
<dbReference type="FunFam" id="3.40.50.720:FF:000075">
    <property type="entry name" value="Mannitol-1-phosphate 5-dehydrogenase"/>
    <property type="match status" value="1"/>
</dbReference>
<dbReference type="Gene3D" id="1.10.1040.10">
    <property type="entry name" value="N-(1-d-carboxylethyl)-l-norvaline Dehydrogenase, domain 2"/>
    <property type="match status" value="1"/>
</dbReference>
<dbReference type="Gene3D" id="3.40.50.720">
    <property type="entry name" value="NAD(P)-binding Rossmann-like Domain"/>
    <property type="match status" value="1"/>
</dbReference>
<dbReference type="HAMAP" id="MF_00196">
    <property type="entry name" value="Mannitol_dehydrog"/>
    <property type="match status" value="1"/>
</dbReference>
<dbReference type="InterPro" id="IPR008927">
    <property type="entry name" value="6-PGluconate_DH-like_C_sf"/>
</dbReference>
<dbReference type="InterPro" id="IPR013328">
    <property type="entry name" value="6PGD_dom2"/>
</dbReference>
<dbReference type="InterPro" id="IPR023028">
    <property type="entry name" value="Mannitol_1_phos_5_DH"/>
</dbReference>
<dbReference type="InterPro" id="IPR000669">
    <property type="entry name" value="Mannitol_DH"/>
</dbReference>
<dbReference type="InterPro" id="IPR013118">
    <property type="entry name" value="Mannitol_DH_C"/>
</dbReference>
<dbReference type="InterPro" id="IPR023027">
    <property type="entry name" value="Mannitol_DH_CS"/>
</dbReference>
<dbReference type="InterPro" id="IPR013131">
    <property type="entry name" value="Mannitol_DH_N"/>
</dbReference>
<dbReference type="InterPro" id="IPR036291">
    <property type="entry name" value="NAD(P)-bd_dom_sf"/>
</dbReference>
<dbReference type="NCBIfam" id="NF002646">
    <property type="entry name" value="PRK02318.1-2"/>
    <property type="match status" value="1"/>
</dbReference>
<dbReference type="NCBIfam" id="NF002647">
    <property type="entry name" value="PRK02318.1-3"/>
    <property type="match status" value="1"/>
</dbReference>
<dbReference type="NCBIfam" id="NF002650">
    <property type="entry name" value="PRK02318.2-2"/>
    <property type="match status" value="1"/>
</dbReference>
<dbReference type="NCBIfam" id="NF002652">
    <property type="entry name" value="PRK02318.2-5"/>
    <property type="match status" value="1"/>
</dbReference>
<dbReference type="PANTHER" id="PTHR30524:SF0">
    <property type="entry name" value="ALTRONATE OXIDOREDUCTASE-RELATED"/>
    <property type="match status" value="1"/>
</dbReference>
<dbReference type="PANTHER" id="PTHR30524">
    <property type="entry name" value="MANNITOL-1-PHOSPHATE 5-DEHYDROGENASE"/>
    <property type="match status" value="1"/>
</dbReference>
<dbReference type="Pfam" id="PF01232">
    <property type="entry name" value="Mannitol_dh"/>
    <property type="match status" value="1"/>
</dbReference>
<dbReference type="Pfam" id="PF08125">
    <property type="entry name" value="Mannitol_dh_C"/>
    <property type="match status" value="1"/>
</dbReference>
<dbReference type="PRINTS" id="PR00084">
    <property type="entry name" value="MTLDHDRGNASE"/>
</dbReference>
<dbReference type="SUPFAM" id="SSF48179">
    <property type="entry name" value="6-phosphogluconate dehydrogenase C-terminal domain-like"/>
    <property type="match status" value="1"/>
</dbReference>
<dbReference type="SUPFAM" id="SSF51735">
    <property type="entry name" value="NAD(P)-binding Rossmann-fold domains"/>
    <property type="match status" value="1"/>
</dbReference>
<dbReference type="PROSITE" id="PS00974">
    <property type="entry name" value="MANNITOL_DHGENASE"/>
    <property type="match status" value="1"/>
</dbReference>
<keyword id="KW-0520">NAD</keyword>
<keyword id="KW-0560">Oxidoreductase</keyword>
<keyword id="KW-1185">Reference proteome</keyword>
<gene>
    <name evidence="1" type="primary">mtlD</name>
    <name type="ordered locus">Tola_0284</name>
</gene>
<feature type="chain" id="PRO_1000204054" description="Mannitol-1-phosphate 5-dehydrogenase">
    <location>
        <begin position="1"/>
        <end position="382"/>
    </location>
</feature>
<feature type="binding site" evidence="1">
    <location>
        <begin position="3"/>
        <end position="14"/>
    </location>
    <ligand>
        <name>NAD(+)</name>
        <dbReference type="ChEBI" id="CHEBI:57540"/>
    </ligand>
</feature>